<evidence type="ECO:0000255" key="1">
    <source>
        <dbReference type="HAMAP-Rule" id="MF_01576"/>
    </source>
</evidence>
<keyword id="KW-0028">Amino-acid biosynthesis</keyword>
<keyword id="KW-0368">Histidine biosynthesis</keyword>
<keyword id="KW-0378">Hydrolase</keyword>
<keyword id="KW-0486">Methionine biosynthesis</keyword>
<keyword id="KW-0511">Multifunctional enzyme</keyword>
<keyword id="KW-0521">NADP</keyword>
<keyword id="KW-0554">One-carbon metabolism</keyword>
<keyword id="KW-0560">Oxidoreductase</keyword>
<keyword id="KW-0658">Purine biosynthesis</keyword>
<keyword id="KW-1185">Reference proteome</keyword>
<reference key="1">
    <citation type="journal article" date="2007" name="J. Bacteriol.">
        <title>Whole-genome analysis of the methyl tert-butyl ether-degrading beta-proteobacterium Methylibium petroleiphilum PM1.</title>
        <authorList>
            <person name="Kane S.R."/>
            <person name="Chakicherla A.Y."/>
            <person name="Chain P.S.G."/>
            <person name="Schmidt R."/>
            <person name="Shin M.W."/>
            <person name="Legler T.C."/>
            <person name="Scow K.M."/>
            <person name="Larimer F.W."/>
            <person name="Lucas S.M."/>
            <person name="Richardson P.M."/>
            <person name="Hristova K.R."/>
        </authorList>
    </citation>
    <scope>NUCLEOTIDE SEQUENCE [LARGE SCALE GENOMIC DNA]</scope>
    <source>
        <strain>ATCC BAA-1232 / LMG 22953 / PM1</strain>
    </source>
</reference>
<sequence length="283" mass="29874">MSARAIDGNALSRHLRHEVAQRAATLREHGITPGLAVILVGENPASQVYVRNKVKACHDSGLHSVLEHYPAAMTEAELLARVQALNADPAIHGILVQLPLPPHIDAHRVIETIAPHKDVDGFHVASAGALMVGQPGFKPCTPYGCMKMLESIGYDPKGKHAVVIGRSNIVGKPMAMLLLQANATVTVCHSATPDLALHTRQADIVVAAVGKRKVLTADMVKPGAVVIDVGMNRDDHGKLCGDVDYAGVAKVAGWITPVPGGVGPMTITMLLMNTLESAERLVG</sequence>
<protein>
    <recommendedName>
        <fullName evidence="1">Bifunctional protein FolD</fullName>
    </recommendedName>
    <domain>
        <recommendedName>
            <fullName evidence="1">Methylenetetrahydrofolate dehydrogenase</fullName>
            <ecNumber evidence="1">1.5.1.5</ecNumber>
        </recommendedName>
    </domain>
    <domain>
        <recommendedName>
            <fullName evidence="1">Methenyltetrahydrofolate cyclohydrolase</fullName>
            <ecNumber evidence="1">3.5.4.9</ecNumber>
        </recommendedName>
    </domain>
</protein>
<name>FOLD_METPP</name>
<comment type="function">
    <text evidence="1">Catalyzes the oxidation of 5,10-methylenetetrahydrofolate to 5,10-methenyltetrahydrofolate and then the hydrolysis of 5,10-methenyltetrahydrofolate to 10-formyltetrahydrofolate.</text>
</comment>
<comment type="catalytic activity">
    <reaction evidence="1">
        <text>(6R)-5,10-methylene-5,6,7,8-tetrahydrofolate + NADP(+) = (6R)-5,10-methenyltetrahydrofolate + NADPH</text>
        <dbReference type="Rhea" id="RHEA:22812"/>
        <dbReference type="ChEBI" id="CHEBI:15636"/>
        <dbReference type="ChEBI" id="CHEBI:57455"/>
        <dbReference type="ChEBI" id="CHEBI:57783"/>
        <dbReference type="ChEBI" id="CHEBI:58349"/>
        <dbReference type="EC" id="1.5.1.5"/>
    </reaction>
</comment>
<comment type="catalytic activity">
    <reaction evidence="1">
        <text>(6R)-5,10-methenyltetrahydrofolate + H2O = (6R)-10-formyltetrahydrofolate + H(+)</text>
        <dbReference type="Rhea" id="RHEA:23700"/>
        <dbReference type="ChEBI" id="CHEBI:15377"/>
        <dbReference type="ChEBI" id="CHEBI:15378"/>
        <dbReference type="ChEBI" id="CHEBI:57455"/>
        <dbReference type="ChEBI" id="CHEBI:195366"/>
        <dbReference type="EC" id="3.5.4.9"/>
    </reaction>
</comment>
<comment type="pathway">
    <text evidence="1">One-carbon metabolism; tetrahydrofolate interconversion.</text>
</comment>
<comment type="subunit">
    <text evidence="1">Homodimer.</text>
</comment>
<comment type="similarity">
    <text evidence="1">Belongs to the tetrahydrofolate dehydrogenase/cyclohydrolase family.</text>
</comment>
<dbReference type="EC" id="1.5.1.5" evidence="1"/>
<dbReference type="EC" id="3.5.4.9" evidence="1"/>
<dbReference type="EMBL" id="CP000555">
    <property type="protein sequence ID" value="ABM95087.1"/>
    <property type="molecule type" value="Genomic_DNA"/>
</dbReference>
<dbReference type="RefSeq" id="WP_011829724.1">
    <property type="nucleotide sequence ID" value="NC_008825.1"/>
</dbReference>
<dbReference type="SMR" id="A2SHP8"/>
<dbReference type="STRING" id="420662.Mpe_A2131"/>
<dbReference type="KEGG" id="mpt:Mpe_A2131"/>
<dbReference type="eggNOG" id="COG0190">
    <property type="taxonomic scope" value="Bacteria"/>
</dbReference>
<dbReference type="HOGENOM" id="CLU_034045_2_1_4"/>
<dbReference type="UniPathway" id="UPA00193"/>
<dbReference type="Proteomes" id="UP000000366">
    <property type="component" value="Chromosome"/>
</dbReference>
<dbReference type="GO" id="GO:0005829">
    <property type="term" value="C:cytosol"/>
    <property type="evidence" value="ECO:0007669"/>
    <property type="project" value="TreeGrafter"/>
</dbReference>
<dbReference type="GO" id="GO:0004477">
    <property type="term" value="F:methenyltetrahydrofolate cyclohydrolase activity"/>
    <property type="evidence" value="ECO:0007669"/>
    <property type="project" value="UniProtKB-UniRule"/>
</dbReference>
<dbReference type="GO" id="GO:0004488">
    <property type="term" value="F:methylenetetrahydrofolate dehydrogenase (NADP+) activity"/>
    <property type="evidence" value="ECO:0007669"/>
    <property type="project" value="UniProtKB-UniRule"/>
</dbReference>
<dbReference type="GO" id="GO:0000105">
    <property type="term" value="P:L-histidine biosynthetic process"/>
    <property type="evidence" value="ECO:0007669"/>
    <property type="project" value="UniProtKB-KW"/>
</dbReference>
<dbReference type="GO" id="GO:0009086">
    <property type="term" value="P:methionine biosynthetic process"/>
    <property type="evidence" value="ECO:0007669"/>
    <property type="project" value="UniProtKB-KW"/>
</dbReference>
<dbReference type="GO" id="GO:0006164">
    <property type="term" value="P:purine nucleotide biosynthetic process"/>
    <property type="evidence" value="ECO:0007669"/>
    <property type="project" value="UniProtKB-KW"/>
</dbReference>
<dbReference type="GO" id="GO:0035999">
    <property type="term" value="P:tetrahydrofolate interconversion"/>
    <property type="evidence" value="ECO:0007669"/>
    <property type="project" value="UniProtKB-UniRule"/>
</dbReference>
<dbReference type="CDD" id="cd01080">
    <property type="entry name" value="NAD_bind_m-THF_DH_Cyclohyd"/>
    <property type="match status" value="1"/>
</dbReference>
<dbReference type="FunFam" id="3.40.50.720:FF:000094">
    <property type="entry name" value="Bifunctional protein FolD"/>
    <property type="match status" value="1"/>
</dbReference>
<dbReference type="FunFam" id="3.40.50.10860:FF:000005">
    <property type="entry name" value="C-1-tetrahydrofolate synthase, cytoplasmic, putative"/>
    <property type="match status" value="1"/>
</dbReference>
<dbReference type="Gene3D" id="3.40.50.10860">
    <property type="entry name" value="Leucine Dehydrogenase, chain A, domain 1"/>
    <property type="match status" value="1"/>
</dbReference>
<dbReference type="Gene3D" id="3.40.50.720">
    <property type="entry name" value="NAD(P)-binding Rossmann-like Domain"/>
    <property type="match status" value="1"/>
</dbReference>
<dbReference type="HAMAP" id="MF_01576">
    <property type="entry name" value="THF_DHG_CYH"/>
    <property type="match status" value="1"/>
</dbReference>
<dbReference type="InterPro" id="IPR046346">
    <property type="entry name" value="Aminoacid_DH-like_N_sf"/>
</dbReference>
<dbReference type="InterPro" id="IPR036291">
    <property type="entry name" value="NAD(P)-bd_dom_sf"/>
</dbReference>
<dbReference type="InterPro" id="IPR000672">
    <property type="entry name" value="THF_DH/CycHdrlase"/>
</dbReference>
<dbReference type="InterPro" id="IPR020630">
    <property type="entry name" value="THF_DH/CycHdrlase_cat_dom"/>
</dbReference>
<dbReference type="InterPro" id="IPR020867">
    <property type="entry name" value="THF_DH/CycHdrlase_CS"/>
</dbReference>
<dbReference type="InterPro" id="IPR020631">
    <property type="entry name" value="THF_DH/CycHdrlase_NAD-bd_dom"/>
</dbReference>
<dbReference type="NCBIfam" id="NF008058">
    <property type="entry name" value="PRK10792.1"/>
    <property type="match status" value="1"/>
</dbReference>
<dbReference type="NCBIfam" id="NF010783">
    <property type="entry name" value="PRK14186.1"/>
    <property type="match status" value="1"/>
</dbReference>
<dbReference type="NCBIfam" id="NF010786">
    <property type="entry name" value="PRK14189.1"/>
    <property type="match status" value="1"/>
</dbReference>
<dbReference type="PANTHER" id="PTHR48099:SF5">
    <property type="entry name" value="C-1-TETRAHYDROFOLATE SYNTHASE, CYTOPLASMIC"/>
    <property type="match status" value="1"/>
</dbReference>
<dbReference type="PANTHER" id="PTHR48099">
    <property type="entry name" value="C-1-TETRAHYDROFOLATE SYNTHASE, CYTOPLASMIC-RELATED"/>
    <property type="match status" value="1"/>
</dbReference>
<dbReference type="Pfam" id="PF00763">
    <property type="entry name" value="THF_DHG_CYH"/>
    <property type="match status" value="1"/>
</dbReference>
<dbReference type="Pfam" id="PF02882">
    <property type="entry name" value="THF_DHG_CYH_C"/>
    <property type="match status" value="1"/>
</dbReference>
<dbReference type="PRINTS" id="PR00085">
    <property type="entry name" value="THFDHDRGNASE"/>
</dbReference>
<dbReference type="SUPFAM" id="SSF53223">
    <property type="entry name" value="Aminoacid dehydrogenase-like, N-terminal domain"/>
    <property type="match status" value="1"/>
</dbReference>
<dbReference type="SUPFAM" id="SSF51735">
    <property type="entry name" value="NAD(P)-binding Rossmann-fold domains"/>
    <property type="match status" value="1"/>
</dbReference>
<dbReference type="PROSITE" id="PS00766">
    <property type="entry name" value="THF_DHG_CYH_1"/>
    <property type="match status" value="1"/>
</dbReference>
<dbReference type="PROSITE" id="PS00767">
    <property type="entry name" value="THF_DHG_CYH_2"/>
    <property type="match status" value="1"/>
</dbReference>
<gene>
    <name evidence="1" type="primary">folD</name>
    <name type="ordered locus">Mpe_A2131</name>
</gene>
<accession>A2SHP8</accession>
<organism>
    <name type="scientific">Methylibium petroleiphilum (strain ATCC BAA-1232 / LMG 22953 / PM1)</name>
    <dbReference type="NCBI Taxonomy" id="420662"/>
    <lineage>
        <taxon>Bacteria</taxon>
        <taxon>Pseudomonadati</taxon>
        <taxon>Pseudomonadota</taxon>
        <taxon>Betaproteobacteria</taxon>
        <taxon>Burkholderiales</taxon>
        <taxon>Sphaerotilaceae</taxon>
        <taxon>Methylibium</taxon>
    </lineage>
</organism>
<proteinExistence type="inferred from homology"/>
<feature type="chain" id="PRO_0000305841" description="Bifunctional protein FolD">
    <location>
        <begin position="1"/>
        <end position="283"/>
    </location>
</feature>
<feature type="binding site" evidence="1">
    <location>
        <begin position="165"/>
        <end position="167"/>
    </location>
    <ligand>
        <name>NADP(+)</name>
        <dbReference type="ChEBI" id="CHEBI:58349"/>
    </ligand>
</feature>
<feature type="binding site" evidence="1">
    <location>
        <position position="190"/>
    </location>
    <ligand>
        <name>NADP(+)</name>
        <dbReference type="ChEBI" id="CHEBI:58349"/>
    </ligand>
</feature>